<evidence type="ECO:0000255" key="1">
    <source>
        <dbReference type="HAMAP-Rule" id="MF_01367"/>
    </source>
</evidence>
<evidence type="ECO:0000305" key="2"/>
<reference key="1">
    <citation type="submission" date="2009-01" db="EMBL/GenBank/DDBJ databases">
        <title>Complete sequence of Clostridium cellulolyticum H10.</title>
        <authorList>
            <consortium name="US DOE Joint Genome Institute"/>
            <person name="Lucas S."/>
            <person name="Copeland A."/>
            <person name="Lapidus A."/>
            <person name="Glavina del Rio T."/>
            <person name="Dalin E."/>
            <person name="Tice H."/>
            <person name="Bruce D."/>
            <person name="Goodwin L."/>
            <person name="Pitluck S."/>
            <person name="Chertkov O."/>
            <person name="Saunders E."/>
            <person name="Brettin T."/>
            <person name="Detter J.C."/>
            <person name="Han C."/>
            <person name="Larimer F."/>
            <person name="Land M."/>
            <person name="Hauser L."/>
            <person name="Kyrpides N."/>
            <person name="Ivanova N."/>
            <person name="Zhou J."/>
            <person name="Richardson P."/>
        </authorList>
    </citation>
    <scope>NUCLEOTIDE SEQUENCE [LARGE SCALE GENOMIC DNA]</scope>
    <source>
        <strain>ATCC 35319 / DSM 5812 / JCM 6584 / H10</strain>
    </source>
</reference>
<comment type="function">
    <text evidence="1">Binds to 23S rRNA. Forms part of two intersubunit bridges in the 70S ribosome.</text>
</comment>
<comment type="subunit">
    <text evidence="1">Part of the 50S ribosomal subunit. Forms a cluster with proteins L3 and L19. In the 70S ribosome, L14 and L19 interact and together make contacts with the 16S rRNA in bridges B5 and B8.</text>
</comment>
<comment type="similarity">
    <text evidence="1">Belongs to the universal ribosomal protein uL14 family.</text>
</comment>
<feature type="chain" id="PRO_1000166912" description="Large ribosomal subunit protein uL14">
    <location>
        <begin position="1"/>
        <end position="122"/>
    </location>
</feature>
<name>RL14_RUMCH</name>
<accession>B8I7Y9</accession>
<organism>
    <name type="scientific">Ruminiclostridium cellulolyticum (strain ATCC 35319 / DSM 5812 / JCM 6584 / H10)</name>
    <name type="common">Clostridium cellulolyticum</name>
    <dbReference type="NCBI Taxonomy" id="394503"/>
    <lineage>
        <taxon>Bacteria</taxon>
        <taxon>Bacillati</taxon>
        <taxon>Bacillota</taxon>
        <taxon>Clostridia</taxon>
        <taxon>Eubacteriales</taxon>
        <taxon>Oscillospiraceae</taxon>
        <taxon>Ruminiclostridium</taxon>
    </lineage>
</organism>
<gene>
    <name evidence="1" type="primary">rplN</name>
    <name type="ordered locus">Ccel_0768</name>
</gene>
<protein>
    <recommendedName>
        <fullName evidence="1">Large ribosomal subunit protein uL14</fullName>
    </recommendedName>
    <alternativeName>
        <fullName evidence="2">50S ribosomal protein L14</fullName>
    </alternativeName>
</protein>
<sequence>MIQVQSRMKVADNTGAKELMCIKVLGGSWRKYANIGDVVVASVKNATPGGVVKKGDVVKCVIVRSKKGVRRPDGSYIRFDENAAVIIKDDKNPRGTRIFGPVARELREKNFMKIVSLAPEVL</sequence>
<proteinExistence type="inferred from homology"/>
<dbReference type="EMBL" id="CP001348">
    <property type="protein sequence ID" value="ACL75146.1"/>
    <property type="molecule type" value="Genomic_DNA"/>
</dbReference>
<dbReference type="RefSeq" id="WP_015924311.1">
    <property type="nucleotide sequence ID" value="NC_011898.1"/>
</dbReference>
<dbReference type="SMR" id="B8I7Y9"/>
<dbReference type="STRING" id="394503.Ccel_0768"/>
<dbReference type="KEGG" id="cce:Ccel_0768"/>
<dbReference type="eggNOG" id="COG0093">
    <property type="taxonomic scope" value="Bacteria"/>
</dbReference>
<dbReference type="HOGENOM" id="CLU_095071_2_1_9"/>
<dbReference type="OrthoDB" id="9806379at2"/>
<dbReference type="Proteomes" id="UP000001349">
    <property type="component" value="Chromosome"/>
</dbReference>
<dbReference type="GO" id="GO:0022625">
    <property type="term" value="C:cytosolic large ribosomal subunit"/>
    <property type="evidence" value="ECO:0007669"/>
    <property type="project" value="TreeGrafter"/>
</dbReference>
<dbReference type="GO" id="GO:0070180">
    <property type="term" value="F:large ribosomal subunit rRNA binding"/>
    <property type="evidence" value="ECO:0007669"/>
    <property type="project" value="TreeGrafter"/>
</dbReference>
<dbReference type="GO" id="GO:0003735">
    <property type="term" value="F:structural constituent of ribosome"/>
    <property type="evidence" value="ECO:0007669"/>
    <property type="project" value="InterPro"/>
</dbReference>
<dbReference type="GO" id="GO:0006412">
    <property type="term" value="P:translation"/>
    <property type="evidence" value="ECO:0007669"/>
    <property type="project" value="UniProtKB-UniRule"/>
</dbReference>
<dbReference type="CDD" id="cd00337">
    <property type="entry name" value="Ribosomal_uL14"/>
    <property type="match status" value="1"/>
</dbReference>
<dbReference type="FunFam" id="2.40.150.20:FF:000001">
    <property type="entry name" value="50S ribosomal protein L14"/>
    <property type="match status" value="1"/>
</dbReference>
<dbReference type="Gene3D" id="2.40.150.20">
    <property type="entry name" value="Ribosomal protein L14"/>
    <property type="match status" value="1"/>
</dbReference>
<dbReference type="HAMAP" id="MF_01367">
    <property type="entry name" value="Ribosomal_uL14"/>
    <property type="match status" value="1"/>
</dbReference>
<dbReference type="InterPro" id="IPR000218">
    <property type="entry name" value="Ribosomal_uL14"/>
</dbReference>
<dbReference type="InterPro" id="IPR005745">
    <property type="entry name" value="Ribosomal_uL14_bac-type"/>
</dbReference>
<dbReference type="InterPro" id="IPR036853">
    <property type="entry name" value="Ribosomal_uL14_sf"/>
</dbReference>
<dbReference type="NCBIfam" id="TIGR01067">
    <property type="entry name" value="rplN_bact"/>
    <property type="match status" value="1"/>
</dbReference>
<dbReference type="PANTHER" id="PTHR11761">
    <property type="entry name" value="50S/60S RIBOSOMAL PROTEIN L14/L23"/>
    <property type="match status" value="1"/>
</dbReference>
<dbReference type="PANTHER" id="PTHR11761:SF3">
    <property type="entry name" value="LARGE RIBOSOMAL SUBUNIT PROTEIN UL14M"/>
    <property type="match status" value="1"/>
</dbReference>
<dbReference type="Pfam" id="PF00238">
    <property type="entry name" value="Ribosomal_L14"/>
    <property type="match status" value="1"/>
</dbReference>
<dbReference type="SMART" id="SM01374">
    <property type="entry name" value="Ribosomal_L14"/>
    <property type="match status" value="1"/>
</dbReference>
<dbReference type="SUPFAM" id="SSF50193">
    <property type="entry name" value="Ribosomal protein L14"/>
    <property type="match status" value="1"/>
</dbReference>
<keyword id="KW-1185">Reference proteome</keyword>
<keyword id="KW-0687">Ribonucleoprotein</keyword>
<keyword id="KW-0689">Ribosomal protein</keyword>
<keyword id="KW-0694">RNA-binding</keyword>
<keyword id="KW-0699">rRNA-binding</keyword>